<feature type="chain" id="PRO_0000092855" description="Phosphate import ATP-binding protein PstB">
    <location>
        <begin position="1"/>
        <end position="258"/>
    </location>
</feature>
<feature type="domain" description="ABC transporter" evidence="1">
    <location>
        <begin position="12"/>
        <end position="253"/>
    </location>
</feature>
<feature type="binding site" evidence="1">
    <location>
        <begin position="44"/>
        <end position="51"/>
    </location>
    <ligand>
        <name>ATP</name>
        <dbReference type="ChEBI" id="CHEBI:30616"/>
    </ligand>
</feature>
<sequence>MNIVNDIASSKIQVHNLNFYYGKFHALKNITLNIAKNKVTAFIGPSGCGKSTLLRTFNKMYELYGEQRAEGKILLDGKNILTDKQDVALLRANVGMVFQKPTPFPMSIYDNIAFGVRLFEKLSRAEMDERVQWALTKAALWSETRDKLYQSGYSLSGGQQQRLCIARGIAIRPEVLLLDEPCSALDPISTGRIEELISELKSEYTVVIVTHNMQQAARCSDHTAFMYLGELIEFSDTDTLFTTPKMKQTEDYITGRYG</sequence>
<comment type="function">
    <text evidence="1">Part of the ABC transporter complex PstSACB involved in phosphate import. Responsible for energy coupling to the transport system.</text>
</comment>
<comment type="catalytic activity">
    <reaction evidence="1">
        <text>phosphate(out) + ATP + H2O = ADP + 2 phosphate(in) + H(+)</text>
        <dbReference type="Rhea" id="RHEA:24440"/>
        <dbReference type="ChEBI" id="CHEBI:15377"/>
        <dbReference type="ChEBI" id="CHEBI:15378"/>
        <dbReference type="ChEBI" id="CHEBI:30616"/>
        <dbReference type="ChEBI" id="CHEBI:43474"/>
        <dbReference type="ChEBI" id="CHEBI:456216"/>
        <dbReference type="EC" id="7.3.2.1"/>
    </reaction>
</comment>
<comment type="subunit">
    <text evidence="1">The complex is composed of two ATP-binding proteins (PstB), two transmembrane proteins (PstC and PstA) and a solute-binding protein (PstS).</text>
</comment>
<comment type="subcellular location">
    <subcellularLocation>
        <location evidence="1">Cell inner membrane</location>
        <topology evidence="1">Peripheral membrane protein</topology>
    </subcellularLocation>
</comment>
<comment type="similarity">
    <text evidence="1">Belongs to the ABC transporter superfamily. Phosphate importer (TC 3.A.1.7) family.</text>
</comment>
<reference key="1">
    <citation type="journal article" date="2003" name="Nat. Biotechnol.">
        <title>The genome sequence of the entomopathogenic bacterium Photorhabdus luminescens.</title>
        <authorList>
            <person name="Duchaud E."/>
            <person name="Rusniok C."/>
            <person name="Frangeul L."/>
            <person name="Buchrieser C."/>
            <person name="Givaudan A."/>
            <person name="Taourit S."/>
            <person name="Bocs S."/>
            <person name="Boursaux-Eude C."/>
            <person name="Chandler M."/>
            <person name="Charles J.-F."/>
            <person name="Dassa E."/>
            <person name="Derose R."/>
            <person name="Derzelle S."/>
            <person name="Freyssinet G."/>
            <person name="Gaudriault S."/>
            <person name="Medigue C."/>
            <person name="Lanois A."/>
            <person name="Powell K."/>
            <person name="Siguier P."/>
            <person name="Vincent R."/>
            <person name="Wingate V."/>
            <person name="Zouine M."/>
            <person name="Glaser P."/>
            <person name="Boemare N."/>
            <person name="Danchin A."/>
            <person name="Kunst F."/>
        </authorList>
    </citation>
    <scope>NUCLEOTIDE SEQUENCE [LARGE SCALE GENOMIC DNA]</scope>
    <source>
        <strain>DSM 15139 / CIP 105565 / TT01</strain>
    </source>
</reference>
<organism>
    <name type="scientific">Photorhabdus laumondii subsp. laumondii (strain DSM 15139 / CIP 105565 / TT01)</name>
    <name type="common">Photorhabdus luminescens subsp. laumondii</name>
    <dbReference type="NCBI Taxonomy" id="243265"/>
    <lineage>
        <taxon>Bacteria</taxon>
        <taxon>Pseudomonadati</taxon>
        <taxon>Pseudomonadota</taxon>
        <taxon>Gammaproteobacteria</taxon>
        <taxon>Enterobacterales</taxon>
        <taxon>Morganellaceae</taxon>
        <taxon>Photorhabdus</taxon>
    </lineage>
</organism>
<proteinExistence type="inferred from homology"/>
<evidence type="ECO:0000255" key="1">
    <source>
        <dbReference type="HAMAP-Rule" id="MF_01702"/>
    </source>
</evidence>
<dbReference type="EC" id="7.3.2.1" evidence="1"/>
<dbReference type="EMBL" id="BX571859">
    <property type="protein sequence ID" value="CAE12512.1"/>
    <property type="molecule type" value="Genomic_DNA"/>
</dbReference>
<dbReference type="RefSeq" id="WP_011144617.1">
    <property type="nucleotide sequence ID" value="NC_005126.1"/>
</dbReference>
<dbReference type="SMR" id="Q7N9U4"/>
<dbReference type="STRING" id="243265.plu0217"/>
<dbReference type="GeneID" id="48846514"/>
<dbReference type="KEGG" id="plu:plu0217"/>
<dbReference type="eggNOG" id="COG1117">
    <property type="taxonomic scope" value="Bacteria"/>
</dbReference>
<dbReference type="HOGENOM" id="CLU_000604_1_22_6"/>
<dbReference type="OrthoDB" id="9802264at2"/>
<dbReference type="Proteomes" id="UP000002514">
    <property type="component" value="Chromosome"/>
</dbReference>
<dbReference type="GO" id="GO:0005886">
    <property type="term" value="C:plasma membrane"/>
    <property type="evidence" value="ECO:0007669"/>
    <property type="project" value="UniProtKB-SubCell"/>
</dbReference>
<dbReference type="GO" id="GO:0005524">
    <property type="term" value="F:ATP binding"/>
    <property type="evidence" value="ECO:0007669"/>
    <property type="project" value="UniProtKB-KW"/>
</dbReference>
<dbReference type="GO" id="GO:0016887">
    <property type="term" value="F:ATP hydrolysis activity"/>
    <property type="evidence" value="ECO:0007669"/>
    <property type="project" value="InterPro"/>
</dbReference>
<dbReference type="GO" id="GO:0015415">
    <property type="term" value="F:ATPase-coupled phosphate ion transmembrane transporter activity"/>
    <property type="evidence" value="ECO:0007669"/>
    <property type="project" value="UniProtKB-EC"/>
</dbReference>
<dbReference type="GO" id="GO:0035435">
    <property type="term" value="P:phosphate ion transmembrane transport"/>
    <property type="evidence" value="ECO:0007669"/>
    <property type="project" value="InterPro"/>
</dbReference>
<dbReference type="CDD" id="cd03260">
    <property type="entry name" value="ABC_PstB_phosphate_transporter"/>
    <property type="match status" value="1"/>
</dbReference>
<dbReference type="FunFam" id="3.40.50.300:FF:000132">
    <property type="entry name" value="Phosphate import ATP-binding protein PstB"/>
    <property type="match status" value="1"/>
</dbReference>
<dbReference type="Gene3D" id="3.40.50.300">
    <property type="entry name" value="P-loop containing nucleotide triphosphate hydrolases"/>
    <property type="match status" value="1"/>
</dbReference>
<dbReference type="InterPro" id="IPR003593">
    <property type="entry name" value="AAA+_ATPase"/>
</dbReference>
<dbReference type="InterPro" id="IPR003439">
    <property type="entry name" value="ABC_transporter-like_ATP-bd"/>
</dbReference>
<dbReference type="InterPro" id="IPR017871">
    <property type="entry name" value="ABC_transporter-like_CS"/>
</dbReference>
<dbReference type="InterPro" id="IPR027417">
    <property type="entry name" value="P-loop_NTPase"/>
</dbReference>
<dbReference type="InterPro" id="IPR005670">
    <property type="entry name" value="PstB-like"/>
</dbReference>
<dbReference type="NCBIfam" id="TIGR00972">
    <property type="entry name" value="3a0107s01c2"/>
    <property type="match status" value="1"/>
</dbReference>
<dbReference type="PANTHER" id="PTHR43423">
    <property type="entry name" value="ABC TRANSPORTER I FAMILY MEMBER 17"/>
    <property type="match status" value="1"/>
</dbReference>
<dbReference type="PANTHER" id="PTHR43423:SF3">
    <property type="entry name" value="PHOSPHATE IMPORT ATP-BINDING PROTEIN PSTB"/>
    <property type="match status" value="1"/>
</dbReference>
<dbReference type="Pfam" id="PF00005">
    <property type="entry name" value="ABC_tran"/>
    <property type="match status" value="1"/>
</dbReference>
<dbReference type="SMART" id="SM00382">
    <property type="entry name" value="AAA"/>
    <property type="match status" value="1"/>
</dbReference>
<dbReference type="SUPFAM" id="SSF52540">
    <property type="entry name" value="P-loop containing nucleoside triphosphate hydrolases"/>
    <property type="match status" value="1"/>
</dbReference>
<dbReference type="PROSITE" id="PS00211">
    <property type="entry name" value="ABC_TRANSPORTER_1"/>
    <property type="match status" value="1"/>
</dbReference>
<dbReference type="PROSITE" id="PS50893">
    <property type="entry name" value="ABC_TRANSPORTER_2"/>
    <property type="match status" value="1"/>
</dbReference>
<dbReference type="PROSITE" id="PS51238">
    <property type="entry name" value="PSTB"/>
    <property type="match status" value="1"/>
</dbReference>
<keyword id="KW-0067">ATP-binding</keyword>
<keyword id="KW-0997">Cell inner membrane</keyword>
<keyword id="KW-1003">Cell membrane</keyword>
<keyword id="KW-0472">Membrane</keyword>
<keyword id="KW-0547">Nucleotide-binding</keyword>
<keyword id="KW-0592">Phosphate transport</keyword>
<keyword id="KW-1185">Reference proteome</keyword>
<keyword id="KW-1278">Translocase</keyword>
<keyword id="KW-0813">Transport</keyword>
<accession>Q7N9U4</accession>
<name>PSTB_PHOLL</name>
<gene>
    <name evidence="1" type="primary">pstB</name>
    <name type="ordered locus">plu0217</name>
</gene>
<protein>
    <recommendedName>
        <fullName evidence="1">Phosphate import ATP-binding protein PstB</fullName>
        <ecNumber evidence="1">7.3.2.1</ecNumber>
    </recommendedName>
    <alternativeName>
        <fullName evidence="1">ABC phosphate transporter</fullName>
    </alternativeName>
    <alternativeName>
        <fullName evidence="1">Phosphate-transporting ATPase</fullName>
    </alternativeName>
</protein>